<accession>A1KU04</accession>
<name>ILVD_NEIMF</name>
<dbReference type="EC" id="4.2.1.9" evidence="1"/>
<dbReference type="EMBL" id="AM421808">
    <property type="protein sequence ID" value="CAM10345.1"/>
    <property type="molecule type" value="Genomic_DNA"/>
</dbReference>
<dbReference type="RefSeq" id="WP_002224542.1">
    <property type="nucleotide sequence ID" value="NC_008767.1"/>
</dbReference>
<dbReference type="SMR" id="A1KU04"/>
<dbReference type="KEGG" id="nmc:NMC1090"/>
<dbReference type="HOGENOM" id="CLU_014271_4_2_4"/>
<dbReference type="UniPathway" id="UPA00047">
    <property type="reaction ID" value="UER00057"/>
</dbReference>
<dbReference type="UniPathway" id="UPA00049">
    <property type="reaction ID" value="UER00061"/>
</dbReference>
<dbReference type="Proteomes" id="UP000002286">
    <property type="component" value="Chromosome"/>
</dbReference>
<dbReference type="GO" id="GO:0005829">
    <property type="term" value="C:cytosol"/>
    <property type="evidence" value="ECO:0007669"/>
    <property type="project" value="TreeGrafter"/>
</dbReference>
<dbReference type="GO" id="GO:0051537">
    <property type="term" value="F:2 iron, 2 sulfur cluster binding"/>
    <property type="evidence" value="ECO:0007669"/>
    <property type="project" value="UniProtKB-UniRule"/>
</dbReference>
<dbReference type="GO" id="GO:0004160">
    <property type="term" value="F:dihydroxy-acid dehydratase activity"/>
    <property type="evidence" value="ECO:0007669"/>
    <property type="project" value="UniProtKB-UniRule"/>
</dbReference>
<dbReference type="GO" id="GO:0000287">
    <property type="term" value="F:magnesium ion binding"/>
    <property type="evidence" value="ECO:0007669"/>
    <property type="project" value="UniProtKB-UniRule"/>
</dbReference>
<dbReference type="GO" id="GO:0009097">
    <property type="term" value="P:isoleucine biosynthetic process"/>
    <property type="evidence" value="ECO:0007669"/>
    <property type="project" value="UniProtKB-UniRule"/>
</dbReference>
<dbReference type="GO" id="GO:0009099">
    <property type="term" value="P:L-valine biosynthetic process"/>
    <property type="evidence" value="ECO:0007669"/>
    <property type="project" value="UniProtKB-UniRule"/>
</dbReference>
<dbReference type="FunFam" id="3.50.30.80:FF:000001">
    <property type="entry name" value="Dihydroxy-acid dehydratase"/>
    <property type="match status" value="1"/>
</dbReference>
<dbReference type="Gene3D" id="3.50.30.80">
    <property type="entry name" value="IlvD/EDD C-terminal domain-like"/>
    <property type="match status" value="1"/>
</dbReference>
<dbReference type="HAMAP" id="MF_00012">
    <property type="entry name" value="IlvD"/>
    <property type="match status" value="1"/>
</dbReference>
<dbReference type="InterPro" id="IPR042096">
    <property type="entry name" value="Dihydro-acid_dehy_C"/>
</dbReference>
<dbReference type="InterPro" id="IPR004404">
    <property type="entry name" value="DihydroxyA_deHydtase"/>
</dbReference>
<dbReference type="InterPro" id="IPR020558">
    <property type="entry name" value="DiOHA_6PGluconate_deHydtase_CS"/>
</dbReference>
<dbReference type="InterPro" id="IPR056740">
    <property type="entry name" value="ILV_EDD_C"/>
</dbReference>
<dbReference type="InterPro" id="IPR000581">
    <property type="entry name" value="ILV_EDD_N"/>
</dbReference>
<dbReference type="InterPro" id="IPR037237">
    <property type="entry name" value="IlvD/EDD_N"/>
</dbReference>
<dbReference type="NCBIfam" id="TIGR00110">
    <property type="entry name" value="ilvD"/>
    <property type="match status" value="1"/>
</dbReference>
<dbReference type="NCBIfam" id="NF009103">
    <property type="entry name" value="PRK12448.1"/>
    <property type="match status" value="1"/>
</dbReference>
<dbReference type="PANTHER" id="PTHR43661">
    <property type="entry name" value="D-XYLONATE DEHYDRATASE"/>
    <property type="match status" value="1"/>
</dbReference>
<dbReference type="PANTHER" id="PTHR43661:SF3">
    <property type="entry name" value="D-XYLONATE DEHYDRATASE YAGF-RELATED"/>
    <property type="match status" value="1"/>
</dbReference>
<dbReference type="Pfam" id="PF24877">
    <property type="entry name" value="ILV_EDD_C"/>
    <property type="match status" value="1"/>
</dbReference>
<dbReference type="Pfam" id="PF00920">
    <property type="entry name" value="ILVD_EDD_N"/>
    <property type="match status" value="1"/>
</dbReference>
<dbReference type="SUPFAM" id="SSF143975">
    <property type="entry name" value="IlvD/EDD N-terminal domain-like"/>
    <property type="match status" value="1"/>
</dbReference>
<dbReference type="SUPFAM" id="SSF52016">
    <property type="entry name" value="LeuD/IlvD-like"/>
    <property type="match status" value="1"/>
</dbReference>
<dbReference type="PROSITE" id="PS00886">
    <property type="entry name" value="ILVD_EDD_1"/>
    <property type="match status" value="1"/>
</dbReference>
<dbReference type="PROSITE" id="PS00887">
    <property type="entry name" value="ILVD_EDD_2"/>
    <property type="match status" value="1"/>
</dbReference>
<organism>
    <name type="scientific">Neisseria meningitidis serogroup C / serotype 2a (strain ATCC 700532 / DSM 15464 / FAM18)</name>
    <dbReference type="NCBI Taxonomy" id="272831"/>
    <lineage>
        <taxon>Bacteria</taxon>
        <taxon>Pseudomonadati</taxon>
        <taxon>Pseudomonadota</taxon>
        <taxon>Betaproteobacteria</taxon>
        <taxon>Neisseriales</taxon>
        <taxon>Neisseriaceae</taxon>
        <taxon>Neisseria</taxon>
    </lineage>
</organism>
<proteinExistence type="inferred from homology"/>
<feature type="chain" id="PRO_1000001016" description="Dihydroxy-acid dehydratase">
    <location>
        <begin position="1"/>
        <end position="619"/>
    </location>
</feature>
<feature type="active site" description="Proton acceptor" evidence="1">
    <location>
        <position position="520"/>
    </location>
</feature>
<feature type="binding site" evidence="1">
    <location>
        <position position="81"/>
    </location>
    <ligand>
        <name>Mg(2+)</name>
        <dbReference type="ChEBI" id="CHEBI:18420"/>
    </ligand>
</feature>
<feature type="binding site" evidence="1">
    <location>
        <position position="122"/>
    </location>
    <ligand>
        <name>[2Fe-2S] cluster</name>
        <dbReference type="ChEBI" id="CHEBI:190135"/>
    </ligand>
</feature>
<feature type="binding site" evidence="1">
    <location>
        <position position="123"/>
    </location>
    <ligand>
        <name>Mg(2+)</name>
        <dbReference type="ChEBI" id="CHEBI:18420"/>
    </ligand>
</feature>
<feature type="binding site" description="via carbamate group" evidence="1">
    <location>
        <position position="124"/>
    </location>
    <ligand>
        <name>Mg(2+)</name>
        <dbReference type="ChEBI" id="CHEBI:18420"/>
    </ligand>
</feature>
<feature type="binding site" evidence="1">
    <location>
        <position position="198"/>
    </location>
    <ligand>
        <name>[2Fe-2S] cluster</name>
        <dbReference type="ChEBI" id="CHEBI:190135"/>
    </ligand>
</feature>
<feature type="binding site" evidence="1">
    <location>
        <position position="494"/>
    </location>
    <ligand>
        <name>Mg(2+)</name>
        <dbReference type="ChEBI" id="CHEBI:18420"/>
    </ligand>
</feature>
<feature type="modified residue" description="N6-carboxylysine" evidence="1">
    <location>
        <position position="124"/>
    </location>
</feature>
<gene>
    <name evidence="1" type="primary">ilvD</name>
    <name type="ordered locus">NMC1090</name>
</gene>
<keyword id="KW-0001">2Fe-2S</keyword>
<keyword id="KW-0028">Amino-acid biosynthesis</keyword>
<keyword id="KW-0100">Branched-chain amino acid biosynthesis</keyword>
<keyword id="KW-0408">Iron</keyword>
<keyword id="KW-0411">Iron-sulfur</keyword>
<keyword id="KW-0456">Lyase</keyword>
<keyword id="KW-0460">Magnesium</keyword>
<keyword id="KW-0479">Metal-binding</keyword>
<sequence length="619" mass="66829">MPEYRSKTSTHGRNMAGARALWRATGVMETDFGKPIIAVANSFTQFVPGHVHLHNMGQLVAREIEKAGAIAKEFNTIAIDDGIAMGHSGMLYSLPSRDLIADSIEYMVNAHCADALVCISNCDKITPGMLIAAMRLNIPTIFVSGGPMEAGKVIGVANIQPERRLDLIDAMIESADDNVSNRQVEEVEQNACPTCGSCSGMFTANSMNCLTEALGLSLPGNGSYLATHVGRKELFLEAGRMIVEITKRYYEQNDETVLPRSIATKKAFENAMTMDIAMGGSTNTILHLLAVANEAGVDFKMADIDRLSRVVPCICKTAPNNHDYYMEDVHRAGGIFAILKELDKAGKLHTDVHTIHAPTLKDAIEKWDITNPENTRAIERFKAAPGGVRTTQAFSQNRMWKTLDLDREKGCIRDVAHAYSQDGGLAVLFGNIAERGCVVKTAGVDESILKFTGRARVFESQEDAVEGILGNQIVAGDIVIIRYEGPKGGPGMQEMLYPTSYLKSKGLGKACALLTDGRFSGGTSGLSIGHASPEAAEGGAIGLVHEGDTVEIDIPNRSIHLAISDEELAARRAEMEARGSKAWKPENRDRYVSAALRAYGAMATSADKGAVRDVAQIER</sequence>
<reference key="1">
    <citation type="journal article" date="2007" name="PLoS Genet.">
        <title>Meningococcal genetic variation mechanisms viewed through comparative analysis of serogroup C strain FAM18.</title>
        <authorList>
            <person name="Bentley S.D."/>
            <person name="Vernikos G.S."/>
            <person name="Snyder L.A.S."/>
            <person name="Churcher C."/>
            <person name="Arrowsmith C."/>
            <person name="Chillingworth T."/>
            <person name="Cronin A."/>
            <person name="Davis P.H."/>
            <person name="Holroyd N.E."/>
            <person name="Jagels K."/>
            <person name="Maddison M."/>
            <person name="Moule S."/>
            <person name="Rabbinowitsch E."/>
            <person name="Sharp S."/>
            <person name="Unwin L."/>
            <person name="Whitehead S."/>
            <person name="Quail M.A."/>
            <person name="Achtman M."/>
            <person name="Barrell B.G."/>
            <person name="Saunders N.J."/>
            <person name="Parkhill J."/>
        </authorList>
    </citation>
    <scope>NUCLEOTIDE SEQUENCE [LARGE SCALE GENOMIC DNA]</scope>
    <source>
        <strain>ATCC 700532 / DSM 15464 / FAM18</strain>
    </source>
</reference>
<evidence type="ECO:0000255" key="1">
    <source>
        <dbReference type="HAMAP-Rule" id="MF_00012"/>
    </source>
</evidence>
<comment type="function">
    <text evidence="1">Functions in the biosynthesis of branched-chain amino acids. Catalyzes the dehydration of (2R,3R)-2,3-dihydroxy-3-methylpentanoate (2,3-dihydroxy-3-methylvalerate) into 2-oxo-3-methylpentanoate (2-oxo-3-methylvalerate) and of (2R)-2,3-dihydroxy-3-methylbutanoate (2,3-dihydroxyisovalerate) into 2-oxo-3-methylbutanoate (2-oxoisovalerate), the penultimate precursor to L-isoleucine and L-valine, respectively.</text>
</comment>
<comment type="catalytic activity">
    <reaction evidence="1">
        <text>(2R)-2,3-dihydroxy-3-methylbutanoate = 3-methyl-2-oxobutanoate + H2O</text>
        <dbReference type="Rhea" id="RHEA:24809"/>
        <dbReference type="ChEBI" id="CHEBI:11851"/>
        <dbReference type="ChEBI" id="CHEBI:15377"/>
        <dbReference type="ChEBI" id="CHEBI:49072"/>
        <dbReference type="EC" id="4.2.1.9"/>
    </reaction>
    <physiologicalReaction direction="left-to-right" evidence="1">
        <dbReference type="Rhea" id="RHEA:24810"/>
    </physiologicalReaction>
</comment>
<comment type="catalytic activity">
    <reaction evidence="1">
        <text>(2R,3R)-2,3-dihydroxy-3-methylpentanoate = (S)-3-methyl-2-oxopentanoate + H2O</text>
        <dbReference type="Rhea" id="RHEA:27694"/>
        <dbReference type="ChEBI" id="CHEBI:15377"/>
        <dbReference type="ChEBI" id="CHEBI:35146"/>
        <dbReference type="ChEBI" id="CHEBI:49258"/>
        <dbReference type="EC" id="4.2.1.9"/>
    </reaction>
    <physiologicalReaction direction="left-to-right" evidence="1">
        <dbReference type="Rhea" id="RHEA:27695"/>
    </physiologicalReaction>
</comment>
<comment type="cofactor">
    <cofactor evidence="1">
        <name>[2Fe-2S] cluster</name>
        <dbReference type="ChEBI" id="CHEBI:190135"/>
    </cofactor>
    <text evidence="1">Binds 1 [2Fe-2S] cluster per subunit. This cluster acts as a Lewis acid cofactor.</text>
</comment>
<comment type="cofactor">
    <cofactor evidence="1">
        <name>Mg(2+)</name>
        <dbReference type="ChEBI" id="CHEBI:18420"/>
    </cofactor>
</comment>
<comment type="pathway">
    <text evidence="1">Amino-acid biosynthesis; L-isoleucine biosynthesis; L-isoleucine from 2-oxobutanoate: step 3/4.</text>
</comment>
<comment type="pathway">
    <text evidence="1">Amino-acid biosynthesis; L-valine biosynthesis; L-valine from pyruvate: step 3/4.</text>
</comment>
<comment type="subunit">
    <text evidence="1">Homodimer.</text>
</comment>
<comment type="similarity">
    <text evidence="1">Belongs to the IlvD/Edd family.</text>
</comment>
<protein>
    <recommendedName>
        <fullName evidence="1">Dihydroxy-acid dehydratase</fullName>
        <shortName evidence="1">DAD</shortName>
        <ecNumber evidence="1">4.2.1.9</ecNumber>
    </recommendedName>
</protein>